<gene>
    <name type="primary">MZB1</name>
    <name type="synonym">PACAP</name>
</gene>
<proteinExistence type="evidence at transcript level"/>
<accession>A5PJ93</accession>
<dbReference type="EMBL" id="BC142012">
    <property type="protein sequence ID" value="AAI42013.1"/>
    <property type="molecule type" value="mRNA"/>
</dbReference>
<dbReference type="RefSeq" id="NP_001092400.1">
    <property type="nucleotide sequence ID" value="NM_001098930.2"/>
</dbReference>
<dbReference type="SMR" id="A5PJ93"/>
<dbReference type="FunCoup" id="A5PJ93">
    <property type="interactions" value="117"/>
</dbReference>
<dbReference type="STRING" id="9913.ENSBTAP00000047624"/>
<dbReference type="PaxDb" id="9913-ENSBTAP00000047624"/>
<dbReference type="GeneID" id="510480"/>
<dbReference type="KEGG" id="bta:510480"/>
<dbReference type="CTD" id="51237"/>
<dbReference type="VEuPathDB" id="HostDB:ENSBTAG00000038337"/>
<dbReference type="eggNOG" id="ENOG502S4B7">
    <property type="taxonomic scope" value="Eukaryota"/>
</dbReference>
<dbReference type="HOGENOM" id="CLU_113467_1_0_1"/>
<dbReference type="InParanoid" id="A5PJ93"/>
<dbReference type="OMA" id="QNWQDYG"/>
<dbReference type="OrthoDB" id="448621at2759"/>
<dbReference type="TreeFam" id="TF329450"/>
<dbReference type="Proteomes" id="UP000009136">
    <property type="component" value="Chromosome 7"/>
</dbReference>
<dbReference type="Bgee" id="ENSBTAG00000038337">
    <property type="expression patterns" value="Expressed in spleen and 87 other cell types or tissues"/>
</dbReference>
<dbReference type="GO" id="GO:0034663">
    <property type="term" value="C:endoplasmic reticulum chaperone complex"/>
    <property type="evidence" value="ECO:0000250"/>
    <property type="project" value="UniProtKB"/>
</dbReference>
<dbReference type="GO" id="GO:0005788">
    <property type="term" value="C:endoplasmic reticulum lumen"/>
    <property type="evidence" value="ECO:0000250"/>
    <property type="project" value="UniProtKB"/>
</dbReference>
<dbReference type="GO" id="GO:0005576">
    <property type="term" value="C:extracellular region"/>
    <property type="evidence" value="ECO:0000250"/>
    <property type="project" value="UniProtKB"/>
</dbReference>
<dbReference type="GO" id="GO:0033622">
    <property type="term" value="P:integrin activation"/>
    <property type="evidence" value="ECO:0000250"/>
    <property type="project" value="UniProtKB"/>
</dbReference>
<dbReference type="GO" id="GO:0008284">
    <property type="term" value="P:positive regulation of cell population proliferation"/>
    <property type="evidence" value="ECO:0000250"/>
    <property type="project" value="UniProtKB"/>
</dbReference>
<dbReference type="GO" id="GO:0002639">
    <property type="term" value="P:positive regulation of immunoglobulin production"/>
    <property type="evidence" value="ECO:0000250"/>
    <property type="project" value="UniProtKB"/>
</dbReference>
<dbReference type="GO" id="GO:0030888">
    <property type="term" value="P:regulation of B cell proliferation"/>
    <property type="evidence" value="ECO:0000250"/>
    <property type="project" value="UniProtKB"/>
</dbReference>
<dbReference type="GO" id="GO:0042127">
    <property type="term" value="P:regulation of cell population proliferation"/>
    <property type="evidence" value="ECO:0000250"/>
    <property type="project" value="UniProtKB"/>
</dbReference>
<dbReference type="GO" id="GO:0046626">
    <property type="term" value="P:regulation of insulin receptor signaling pathway"/>
    <property type="evidence" value="ECO:0000250"/>
    <property type="project" value="UniProtKB"/>
</dbReference>
<dbReference type="InterPro" id="IPR021852">
    <property type="entry name" value="DUF3456"/>
</dbReference>
<dbReference type="InterPro" id="IPR052682">
    <property type="entry name" value="MZB1"/>
</dbReference>
<dbReference type="PANTHER" id="PTHR15881">
    <property type="entry name" value="MARGINAL ZONE B- AND B1-CELL-SPECIFIC PROTEIN"/>
    <property type="match status" value="1"/>
</dbReference>
<dbReference type="PANTHER" id="PTHR15881:SF2">
    <property type="entry name" value="MARGINAL ZONE B- AND B1-CELL-SPECIFIC PROTEIN"/>
    <property type="match status" value="1"/>
</dbReference>
<dbReference type="Pfam" id="PF11938">
    <property type="entry name" value="DUF3456"/>
    <property type="match status" value="1"/>
</dbReference>
<organism>
    <name type="scientific">Bos taurus</name>
    <name type="common">Bovine</name>
    <dbReference type="NCBI Taxonomy" id="9913"/>
    <lineage>
        <taxon>Eukaryota</taxon>
        <taxon>Metazoa</taxon>
        <taxon>Chordata</taxon>
        <taxon>Craniata</taxon>
        <taxon>Vertebrata</taxon>
        <taxon>Euteleostomi</taxon>
        <taxon>Mammalia</taxon>
        <taxon>Eutheria</taxon>
        <taxon>Laurasiatheria</taxon>
        <taxon>Artiodactyla</taxon>
        <taxon>Ruminantia</taxon>
        <taxon>Pecora</taxon>
        <taxon>Bovidae</taxon>
        <taxon>Bovinae</taxon>
        <taxon>Bos</taxon>
    </lineage>
</organism>
<feature type="signal peptide" evidence="3">
    <location>
        <begin position="1"/>
        <end position="16"/>
    </location>
</feature>
<feature type="chain" id="PRO_0000318739" description="Marginal zone B- and B1-cell-specific protein">
    <location>
        <begin position="17"/>
        <end position="189"/>
    </location>
</feature>
<feature type="short sequence motif" description="Prevents secretion from ER" evidence="3">
    <location>
        <begin position="186"/>
        <end position="189"/>
    </location>
</feature>
<feature type="disulfide bond" evidence="1">
    <location>
        <begin position="50"/>
        <end position="178"/>
    </location>
</feature>
<feature type="disulfide bond" evidence="1">
    <location>
        <begin position="53"/>
        <end position="171"/>
    </location>
</feature>
<feature type="disulfide bond" evidence="1">
    <location>
        <begin position="95"/>
        <end position="143"/>
    </location>
</feature>
<keyword id="KW-1015">Disulfide bond</keyword>
<keyword id="KW-0256">Endoplasmic reticulum</keyword>
<keyword id="KW-1185">Reference proteome</keyword>
<keyword id="KW-0964">Secreted</keyword>
<keyword id="KW-0732">Signal</keyword>
<reference key="1">
    <citation type="submission" date="2007-06" db="EMBL/GenBank/DDBJ databases">
        <authorList>
            <consortium name="NIH - Mammalian Gene Collection (MGC) project"/>
        </authorList>
    </citation>
    <scope>NUCLEOTIDE SEQUENCE [LARGE SCALE MRNA]</scope>
    <source>
        <strain>Hereford</strain>
        <tissue>Thymus</tissue>
    </source>
</reference>
<name>MZB1_BOVIN</name>
<protein>
    <recommendedName>
        <fullName>Marginal zone B- and B1-cell-specific protein</fullName>
    </recommendedName>
    <alternativeName>
        <fullName>Plasma cell-induced resident endoplasmic reticulum protein</fullName>
        <shortName>Plasma cell-induced resident ER protein</shortName>
        <shortName>pERp1</shortName>
    </alternativeName>
    <alternativeName>
        <fullName>Proapoptotic caspase adapter protein</fullName>
    </alternativeName>
</protein>
<sequence length="189" mass="20699">MRLSLLLLLPLLGAWAIPGGFGDEASLTATAPELDDEEKFSTHIPTHLRCDACRAVAYQMWQHLTKAEAKLLPLDSGGRRELSESVYTDVLDQSCSQTWQGYGVGEVDQVKRLMGPGLSTGAQPSIMVMIMEGLWPTRLSKTCFHYLGEFGEDQIYEAHQQGRGTLEALLCGGPRGACSEKAPDTRTEL</sequence>
<evidence type="ECO:0000250" key="1"/>
<evidence type="ECO:0000250" key="2">
    <source>
        <dbReference type="UniProtKB" id="Q8WU39"/>
    </source>
</evidence>
<evidence type="ECO:0000255" key="3"/>
<evidence type="ECO:0000305" key="4"/>
<comment type="function">
    <text evidence="1">Associates with immunoglobulin M (IgM) heavy and light chains and promotes IgM assembly and secretion. May exert its effect by acting as a molecular chaperone or as an oxidoreductase as it displays a low level of oxidoreductase activity (By similarity). Helps to diversify peripheral B-cell functions by regulating Ca(2+) stores, antibody secretion, and integrin activation (By similarity).</text>
</comment>
<comment type="function">
    <text evidence="1">Acts as a hormone-regulated adipokine/pro-inflammatory cytokine that is implicated in causing chronic inflammation, affecting cellular expansion and blunting insulin response in adipocytes. May have a role in the onset of insulin resistance (By similarity).</text>
</comment>
<comment type="subunit">
    <text evidence="1">Part of the ER chaperone complex, a multi-protein complex in the endoplasmic reticulum containing a large number of molecular chaperones which associates with unassembled incompletely folded immunoglobulin heavy chains. Interacts with HSP90B1 and PDIA3 in a calcium-dependent manner.</text>
</comment>
<comment type="subcellular location">
    <subcellularLocation>
        <location evidence="2">Endoplasmic reticulum lumen</location>
    </subcellularLocation>
    <subcellularLocation>
        <location evidence="2">Secreted</location>
    </subcellularLocation>
</comment>
<comment type="PTM">
    <text evidence="1">Forms an interchain disulfide bond with IgM monomers.</text>
</comment>
<comment type="similarity">
    <text evidence="4">Belongs to the MZB1 family.</text>
</comment>